<gene>
    <name evidence="1" type="primary">hldD</name>
    <name type="ordered locus">YPTS_0057</name>
</gene>
<accession>B2JYP2</accession>
<reference key="1">
    <citation type="submission" date="2008-04" db="EMBL/GenBank/DDBJ databases">
        <title>Complete sequence of Yersinia pseudotuberculosis PB1/+.</title>
        <authorList>
            <person name="Copeland A."/>
            <person name="Lucas S."/>
            <person name="Lapidus A."/>
            <person name="Glavina del Rio T."/>
            <person name="Dalin E."/>
            <person name="Tice H."/>
            <person name="Bruce D."/>
            <person name="Goodwin L."/>
            <person name="Pitluck S."/>
            <person name="Munk A.C."/>
            <person name="Brettin T."/>
            <person name="Detter J.C."/>
            <person name="Han C."/>
            <person name="Tapia R."/>
            <person name="Schmutz J."/>
            <person name="Larimer F."/>
            <person name="Land M."/>
            <person name="Hauser L."/>
            <person name="Challacombe J.F."/>
            <person name="Green L."/>
            <person name="Lindler L.E."/>
            <person name="Nikolich M.P."/>
            <person name="Richardson P."/>
        </authorList>
    </citation>
    <scope>NUCLEOTIDE SEQUENCE [LARGE SCALE GENOMIC DNA]</scope>
    <source>
        <strain>PB1/+</strain>
    </source>
</reference>
<name>HLDD_YERPB</name>
<proteinExistence type="inferred from homology"/>
<evidence type="ECO:0000255" key="1">
    <source>
        <dbReference type="HAMAP-Rule" id="MF_01601"/>
    </source>
</evidence>
<keyword id="KW-0119">Carbohydrate metabolism</keyword>
<keyword id="KW-0413">Isomerase</keyword>
<keyword id="KW-0521">NADP</keyword>
<dbReference type="EC" id="5.1.3.20" evidence="1"/>
<dbReference type="EMBL" id="CP001048">
    <property type="protein sequence ID" value="ACC87056.1"/>
    <property type="molecule type" value="Genomic_DNA"/>
</dbReference>
<dbReference type="SMR" id="B2JYP2"/>
<dbReference type="KEGG" id="ypb:YPTS_0057"/>
<dbReference type="PATRIC" id="fig|502801.10.peg.3733"/>
<dbReference type="UniPathway" id="UPA00356">
    <property type="reaction ID" value="UER00440"/>
</dbReference>
<dbReference type="GO" id="GO:0008712">
    <property type="term" value="F:ADP-glyceromanno-heptose 6-epimerase activity"/>
    <property type="evidence" value="ECO:0007669"/>
    <property type="project" value="UniProtKB-UniRule"/>
</dbReference>
<dbReference type="GO" id="GO:0050661">
    <property type="term" value="F:NADP binding"/>
    <property type="evidence" value="ECO:0007669"/>
    <property type="project" value="InterPro"/>
</dbReference>
<dbReference type="GO" id="GO:0097171">
    <property type="term" value="P:ADP-L-glycero-beta-D-manno-heptose biosynthetic process"/>
    <property type="evidence" value="ECO:0007669"/>
    <property type="project" value="UniProtKB-UniPathway"/>
</dbReference>
<dbReference type="GO" id="GO:0005975">
    <property type="term" value="P:carbohydrate metabolic process"/>
    <property type="evidence" value="ECO:0007669"/>
    <property type="project" value="UniProtKB-UniRule"/>
</dbReference>
<dbReference type="CDD" id="cd05248">
    <property type="entry name" value="ADP_GME_SDR_e"/>
    <property type="match status" value="1"/>
</dbReference>
<dbReference type="Gene3D" id="3.40.50.720">
    <property type="entry name" value="NAD(P)-binding Rossmann-like Domain"/>
    <property type="match status" value="1"/>
</dbReference>
<dbReference type="Gene3D" id="3.90.25.10">
    <property type="entry name" value="UDP-galactose 4-epimerase, domain 1"/>
    <property type="match status" value="1"/>
</dbReference>
<dbReference type="HAMAP" id="MF_01601">
    <property type="entry name" value="Heptose_epimerase"/>
    <property type="match status" value="1"/>
</dbReference>
<dbReference type="InterPro" id="IPR001509">
    <property type="entry name" value="Epimerase_deHydtase"/>
</dbReference>
<dbReference type="InterPro" id="IPR011912">
    <property type="entry name" value="Heptose_epim"/>
</dbReference>
<dbReference type="InterPro" id="IPR036291">
    <property type="entry name" value="NAD(P)-bd_dom_sf"/>
</dbReference>
<dbReference type="NCBIfam" id="TIGR02197">
    <property type="entry name" value="heptose_epim"/>
    <property type="match status" value="1"/>
</dbReference>
<dbReference type="NCBIfam" id="NF008360">
    <property type="entry name" value="PRK11150.1"/>
    <property type="match status" value="1"/>
</dbReference>
<dbReference type="PANTHER" id="PTHR43103:SF3">
    <property type="entry name" value="ADP-L-GLYCERO-D-MANNO-HEPTOSE-6-EPIMERASE"/>
    <property type="match status" value="1"/>
</dbReference>
<dbReference type="PANTHER" id="PTHR43103">
    <property type="entry name" value="NUCLEOSIDE-DIPHOSPHATE-SUGAR EPIMERASE"/>
    <property type="match status" value="1"/>
</dbReference>
<dbReference type="Pfam" id="PF01370">
    <property type="entry name" value="Epimerase"/>
    <property type="match status" value="1"/>
</dbReference>
<dbReference type="SUPFAM" id="SSF51735">
    <property type="entry name" value="NAD(P)-binding Rossmann-fold domains"/>
    <property type="match status" value="1"/>
</dbReference>
<sequence length="310" mass="34780">MIIVTGGAGFIGSNIVKALNNIGYKDILVVDNLKDGTKFVNLVDLDIADYMDKEDFVASIVAGDDMGDIDAIFHEGACSSTTEWDGKYMMDNNYQYSKDILHFCLDRSIPFLYASSAATYGGRTDNFIEDRQYEQPLNVYGYSKFLFDQYVREILPQADSQICGFRYFNVYGPREGHKGSMASVAFHLNNQINAGERPKLFAGSENFKRDFIYVGDVADVNLWFWQNGVSGIFNCGTGRAESFQAVADAVVDYHQSGPVEYIEFPEKLKGRYQAYTQADLTKLRAAGYGKPFKTVAEGVKEYLAWLNRSV</sequence>
<feature type="chain" id="PRO_1000190414" description="ADP-L-glycero-D-manno-heptose-6-epimerase">
    <location>
        <begin position="1"/>
        <end position="310"/>
    </location>
</feature>
<feature type="active site" description="Proton acceptor" evidence="1">
    <location>
        <position position="140"/>
    </location>
</feature>
<feature type="active site" description="Proton acceptor" evidence="1">
    <location>
        <position position="178"/>
    </location>
</feature>
<feature type="binding site" evidence="1">
    <location>
        <begin position="10"/>
        <end position="11"/>
    </location>
    <ligand>
        <name>NADP(+)</name>
        <dbReference type="ChEBI" id="CHEBI:58349"/>
    </ligand>
</feature>
<feature type="binding site" evidence="1">
    <location>
        <begin position="31"/>
        <end position="32"/>
    </location>
    <ligand>
        <name>NADP(+)</name>
        <dbReference type="ChEBI" id="CHEBI:58349"/>
    </ligand>
</feature>
<feature type="binding site" evidence="1">
    <location>
        <position position="38"/>
    </location>
    <ligand>
        <name>NADP(+)</name>
        <dbReference type="ChEBI" id="CHEBI:58349"/>
    </ligand>
</feature>
<feature type="binding site" evidence="1">
    <location>
        <position position="53"/>
    </location>
    <ligand>
        <name>NADP(+)</name>
        <dbReference type="ChEBI" id="CHEBI:58349"/>
    </ligand>
</feature>
<feature type="binding site" evidence="1">
    <location>
        <begin position="75"/>
        <end position="79"/>
    </location>
    <ligand>
        <name>NADP(+)</name>
        <dbReference type="ChEBI" id="CHEBI:58349"/>
    </ligand>
</feature>
<feature type="binding site" evidence="1">
    <location>
        <position position="92"/>
    </location>
    <ligand>
        <name>NADP(+)</name>
        <dbReference type="ChEBI" id="CHEBI:58349"/>
    </ligand>
</feature>
<feature type="binding site" evidence="1">
    <location>
        <position position="144"/>
    </location>
    <ligand>
        <name>NADP(+)</name>
        <dbReference type="ChEBI" id="CHEBI:58349"/>
    </ligand>
</feature>
<feature type="binding site" evidence="1">
    <location>
        <position position="169"/>
    </location>
    <ligand>
        <name>substrate</name>
    </ligand>
</feature>
<feature type="binding site" evidence="1">
    <location>
        <position position="170"/>
    </location>
    <ligand>
        <name>NADP(+)</name>
        <dbReference type="ChEBI" id="CHEBI:58349"/>
    </ligand>
</feature>
<feature type="binding site" evidence="1">
    <location>
        <position position="178"/>
    </location>
    <ligand>
        <name>NADP(+)</name>
        <dbReference type="ChEBI" id="CHEBI:58349"/>
    </ligand>
</feature>
<feature type="binding site" evidence="1">
    <location>
        <position position="180"/>
    </location>
    <ligand>
        <name>substrate</name>
    </ligand>
</feature>
<feature type="binding site" evidence="1">
    <location>
        <position position="187"/>
    </location>
    <ligand>
        <name>substrate</name>
    </ligand>
</feature>
<feature type="binding site" evidence="1">
    <location>
        <begin position="201"/>
        <end position="204"/>
    </location>
    <ligand>
        <name>substrate</name>
    </ligand>
</feature>
<feature type="binding site" evidence="1">
    <location>
        <position position="209"/>
    </location>
    <ligand>
        <name>substrate</name>
    </ligand>
</feature>
<feature type="binding site" evidence="1">
    <location>
        <position position="272"/>
    </location>
    <ligand>
        <name>substrate</name>
    </ligand>
</feature>
<protein>
    <recommendedName>
        <fullName evidence="1">ADP-L-glycero-D-manno-heptose-6-epimerase</fullName>
        <ecNumber evidence="1">5.1.3.20</ecNumber>
    </recommendedName>
    <alternativeName>
        <fullName evidence="1">ADP-L-glycero-beta-D-manno-heptose-6-epimerase</fullName>
        <shortName evidence="1">ADP-glyceromanno-heptose 6-epimerase</shortName>
        <shortName evidence="1">ADP-hep 6-epimerase</shortName>
        <shortName evidence="1">AGME</shortName>
    </alternativeName>
</protein>
<organism>
    <name type="scientific">Yersinia pseudotuberculosis serotype IB (strain PB1/+)</name>
    <dbReference type="NCBI Taxonomy" id="502801"/>
    <lineage>
        <taxon>Bacteria</taxon>
        <taxon>Pseudomonadati</taxon>
        <taxon>Pseudomonadota</taxon>
        <taxon>Gammaproteobacteria</taxon>
        <taxon>Enterobacterales</taxon>
        <taxon>Yersiniaceae</taxon>
        <taxon>Yersinia</taxon>
    </lineage>
</organism>
<comment type="function">
    <text evidence="1">Catalyzes the interconversion between ADP-D-glycero-beta-D-manno-heptose and ADP-L-glycero-beta-D-manno-heptose via an epimerization at carbon 6 of the heptose.</text>
</comment>
<comment type="catalytic activity">
    <reaction evidence="1">
        <text>ADP-D-glycero-beta-D-manno-heptose = ADP-L-glycero-beta-D-manno-heptose</text>
        <dbReference type="Rhea" id="RHEA:17577"/>
        <dbReference type="ChEBI" id="CHEBI:59967"/>
        <dbReference type="ChEBI" id="CHEBI:61506"/>
        <dbReference type="EC" id="5.1.3.20"/>
    </reaction>
</comment>
<comment type="cofactor">
    <cofactor evidence="1">
        <name>NADP(+)</name>
        <dbReference type="ChEBI" id="CHEBI:58349"/>
    </cofactor>
    <text evidence="1">Binds 1 NADP(+) per subunit.</text>
</comment>
<comment type="pathway">
    <text evidence="1">Nucleotide-sugar biosynthesis; ADP-L-glycero-beta-D-manno-heptose biosynthesis; ADP-L-glycero-beta-D-manno-heptose from D-glycero-beta-D-manno-heptose 7-phosphate: step 4/4.</text>
</comment>
<comment type="subunit">
    <text evidence="1">Homopentamer.</text>
</comment>
<comment type="domain">
    <text evidence="1">Contains a large N-terminal NADP-binding domain, and a smaller C-terminal substrate-binding domain.</text>
</comment>
<comment type="similarity">
    <text evidence="1">Belongs to the NAD(P)-dependent epimerase/dehydratase family. HldD subfamily.</text>
</comment>